<protein>
    <recommendedName>
        <fullName evidence="1">Large ribosomal subunit protein uL11</fullName>
    </recommendedName>
    <alternativeName>
        <fullName evidence="2">50S ribosomal protein L11</fullName>
    </alternativeName>
</protein>
<accession>A8G2L1</accession>
<dbReference type="EMBL" id="CP000825">
    <property type="protein sequence ID" value="ABV49842.1"/>
    <property type="molecule type" value="Genomic_DNA"/>
</dbReference>
<dbReference type="RefSeq" id="WP_002805232.1">
    <property type="nucleotide sequence ID" value="NC_009840.1"/>
</dbReference>
<dbReference type="SMR" id="A8G2L1"/>
<dbReference type="STRING" id="93060.P9215_02231"/>
<dbReference type="KEGG" id="pmh:P9215_02231"/>
<dbReference type="eggNOG" id="COG0080">
    <property type="taxonomic scope" value="Bacteria"/>
</dbReference>
<dbReference type="HOGENOM" id="CLU_074237_2_1_3"/>
<dbReference type="OrthoDB" id="9802408at2"/>
<dbReference type="Proteomes" id="UP000002014">
    <property type="component" value="Chromosome"/>
</dbReference>
<dbReference type="GO" id="GO:0022625">
    <property type="term" value="C:cytosolic large ribosomal subunit"/>
    <property type="evidence" value="ECO:0007669"/>
    <property type="project" value="TreeGrafter"/>
</dbReference>
<dbReference type="GO" id="GO:0070180">
    <property type="term" value="F:large ribosomal subunit rRNA binding"/>
    <property type="evidence" value="ECO:0007669"/>
    <property type="project" value="UniProtKB-UniRule"/>
</dbReference>
<dbReference type="GO" id="GO:0003735">
    <property type="term" value="F:structural constituent of ribosome"/>
    <property type="evidence" value="ECO:0007669"/>
    <property type="project" value="InterPro"/>
</dbReference>
<dbReference type="GO" id="GO:0006412">
    <property type="term" value="P:translation"/>
    <property type="evidence" value="ECO:0007669"/>
    <property type="project" value="UniProtKB-UniRule"/>
</dbReference>
<dbReference type="CDD" id="cd00349">
    <property type="entry name" value="Ribosomal_L11"/>
    <property type="match status" value="1"/>
</dbReference>
<dbReference type="FunFam" id="1.10.10.250:FF:000001">
    <property type="entry name" value="50S ribosomal protein L11"/>
    <property type="match status" value="1"/>
</dbReference>
<dbReference type="FunFam" id="3.30.1550.10:FF:000001">
    <property type="entry name" value="50S ribosomal protein L11"/>
    <property type="match status" value="1"/>
</dbReference>
<dbReference type="Gene3D" id="1.10.10.250">
    <property type="entry name" value="Ribosomal protein L11, C-terminal domain"/>
    <property type="match status" value="1"/>
</dbReference>
<dbReference type="Gene3D" id="3.30.1550.10">
    <property type="entry name" value="Ribosomal protein L11/L12, N-terminal domain"/>
    <property type="match status" value="1"/>
</dbReference>
<dbReference type="HAMAP" id="MF_00736">
    <property type="entry name" value="Ribosomal_uL11"/>
    <property type="match status" value="1"/>
</dbReference>
<dbReference type="InterPro" id="IPR000911">
    <property type="entry name" value="Ribosomal_uL11"/>
</dbReference>
<dbReference type="InterPro" id="IPR006519">
    <property type="entry name" value="Ribosomal_uL11_bac-typ"/>
</dbReference>
<dbReference type="InterPro" id="IPR020783">
    <property type="entry name" value="Ribosomal_uL11_C"/>
</dbReference>
<dbReference type="InterPro" id="IPR036769">
    <property type="entry name" value="Ribosomal_uL11_C_sf"/>
</dbReference>
<dbReference type="InterPro" id="IPR020785">
    <property type="entry name" value="Ribosomal_uL11_CS"/>
</dbReference>
<dbReference type="InterPro" id="IPR020784">
    <property type="entry name" value="Ribosomal_uL11_N"/>
</dbReference>
<dbReference type="InterPro" id="IPR036796">
    <property type="entry name" value="Ribosomal_uL11_N_sf"/>
</dbReference>
<dbReference type="NCBIfam" id="TIGR01632">
    <property type="entry name" value="L11_bact"/>
    <property type="match status" value="1"/>
</dbReference>
<dbReference type="PANTHER" id="PTHR11661">
    <property type="entry name" value="60S RIBOSOMAL PROTEIN L12"/>
    <property type="match status" value="1"/>
</dbReference>
<dbReference type="PANTHER" id="PTHR11661:SF1">
    <property type="entry name" value="LARGE RIBOSOMAL SUBUNIT PROTEIN UL11M"/>
    <property type="match status" value="1"/>
</dbReference>
<dbReference type="Pfam" id="PF00298">
    <property type="entry name" value="Ribosomal_L11"/>
    <property type="match status" value="1"/>
</dbReference>
<dbReference type="Pfam" id="PF03946">
    <property type="entry name" value="Ribosomal_L11_N"/>
    <property type="match status" value="1"/>
</dbReference>
<dbReference type="SMART" id="SM00649">
    <property type="entry name" value="RL11"/>
    <property type="match status" value="1"/>
</dbReference>
<dbReference type="SUPFAM" id="SSF54747">
    <property type="entry name" value="Ribosomal L11/L12e N-terminal domain"/>
    <property type="match status" value="1"/>
</dbReference>
<dbReference type="SUPFAM" id="SSF46906">
    <property type="entry name" value="Ribosomal protein L11, C-terminal domain"/>
    <property type="match status" value="1"/>
</dbReference>
<dbReference type="PROSITE" id="PS00359">
    <property type="entry name" value="RIBOSOMAL_L11"/>
    <property type="match status" value="1"/>
</dbReference>
<comment type="function">
    <text evidence="1">Forms part of the ribosomal stalk which helps the ribosome interact with GTP-bound translation factors.</text>
</comment>
<comment type="subunit">
    <text evidence="1">Part of the ribosomal stalk of the 50S ribosomal subunit. Interacts with L10 and the large rRNA to form the base of the stalk. L10 forms an elongated spine to which L12 dimers bind in a sequential fashion forming a multimeric L10(L12)X complex.</text>
</comment>
<comment type="PTM">
    <text evidence="1">One or more lysine residues are methylated.</text>
</comment>
<comment type="similarity">
    <text evidence="1">Belongs to the universal ribosomal protein uL11 family.</text>
</comment>
<proteinExistence type="inferred from homology"/>
<keyword id="KW-0488">Methylation</keyword>
<keyword id="KW-0687">Ribonucleoprotein</keyword>
<keyword id="KW-0689">Ribosomal protein</keyword>
<keyword id="KW-0694">RNA-binding</keyword>
<keyword id="KW-0699">rRNA-binding</keyword>
<feature type="chain" id="PRO_1000062138" description="Large ribosomal subunit protein uL11">
    <location>
        <begin position="1"/>
        <end position="141"/>
    </location>
</feature>
<evidence type="ECO:0000255" key="1">
    <source>
        <dbReference type="HAMAP-Rule" id="MF_00736"/>
    </source>
</evidence>
<evidence type="ECO:0000305" key="2"/>
<sequence>MAKKIVAVIKLALQAGKANPAPPVGPALGQHGVNIMAFCKEYNARTQDKAGFVIPVEISVFEDRSFTFITKTPPASVLITKAAGIEKGSGESAKGSVGNISKAQLEEIAKTKLPDLNCSSVESAMKVIEGTARNMGVSITD</sequence>
<gene>
    <name evidence="1" type="primary">rplK</name>
    <name evidence="1" type="synonym">rpl11</name>
    <name type="ordered locus">P9215_02231</name>
</gene>
<organism>
    <name type="scientific">Prochlorococcus marinus (strain MIT 9215)</name>
    <dbReference type="NCBI Taxonomy" id="93060"/>
    <lineage>
        <taxon>Bacteria</taxon>
        <taxon>Bacillati</taxon>
        <taxon>Cyanobacteriota</taxon>
        <taxon>Cyanophyceae</taxon>
        <taxon>Synechococcales</taxon>
        <taxon>Prochlorococcaceae</taxon>
        <taxon>Prochlorococcus</taxon>
    </lineage>
</organism>
<reference key="1">
    <citation type="journal article" date="2007" name="PLoS Genet.">
        <title>Patterns and implications of gene gain and loss in the evolution of Prochlorococcus.</title>
        <authorList>
            <person name="Kettler G.C."/>
            <person name="Martiny A.C."/>
            <person name="Huang K."/>
            <person name="Zucker J."/>
            <person name="Coleman M.L."/>
            <person name="Rodrigue S."/>
            <person name="Chen F."/>
            <person name="Lapidus A."/>
            <person name="Ferriera S."/>
            <person name="Johnson J."/>
            <person name="Steglich C."/>
            <person name="Church G.M."/>
            <person name="Richardson P."/>
            <person name="Chisholm S.W."/>
        </authorList>
    </citation>
    <scope>NUCLEOTIDE SEQUENCE [LARGE SCALE GENOMIC DNA]</scope>
    <source>
        <strain>MIT 9215</strain>
    </source>
</reference>
<name>RL11_PROM2</name>